<protein>
    <recommendedName>
        <fullName evidence="7">AMP deaminase 3</fullName>
        <ecNumber evidence="5">3.5.4.6</ecNumber>
    </recommendedName>
    <alternativeName>
        <fullName>AMP deaminase H-type</fullName>
    </alternativeName>
    <alternativeName>
        <fullName>AMP deaminase isoform E</fullName>
    </alternativeName>
    <alternativeName>
        <fullName>Heart-type AMPD</fullName>
    </alternativeName>
</protein>
<sequence>MPRQFPKLNMSDLDEHVRLLAEKVFAKVLREEDSKDVMSLFTVPEDCPIGQKEAKERELQKELAEQKSVETAKRKKSFKMIRSQSLSLQMPTQQDWKGPPTASPAMSPATPLVPGATSKPGPAPYAMPEYQRVTISGDYCAGITVEDYEQAAKSLAKALMIREKYARLAYHRFPRTTAQYLAHQGESVPLEEGLPDFHPPPLPQEDPYCLDDAPPNLGYLVRMHGGVLFVYDNQTMLERQEPHSLPYPDLETYIVDMSHILALITDGPTKTYCHRRLNFLESKFSLHEMLNEMSEFKELKSNPHRDFYNVRKVDTHIHAAACMNQKHLLRFIKHTYQTEPDRTVAEKLGRKITLRQVFDSLHMDPYDLTVDSLDVHAGRQTFHRFDKFNSKYNPVGASELRDLYLKTENYLGGEYFARMVKEVARELEDSKYQYSEPRLSIYGRSPKEWSSLARWFIQHKVYSPNMRWIIQVPRIYDIFRSKKLLPNFGKMLENIFLPLFKATINPQDHRELHLFLKYVTGFDSVDDESKHSDHMFSDKSPSPDLWTSEQNPPYSYYLYYMYANIMVLNNLRRERGLSTFLFRPHCGEAGSITHLVSAFLTADNISHGLLLKKSPVLQYLYYLAQIPIAMSPLSNNSLFLEYSKNPLREFLHKGLHVSLSTDDPMQFHYTKEALMEEYAIAAQVWKLSTCDLCEIARNSVLQSGLSHQEKQKFLGQNYYKEGPEGNDIRKTNVAQIRMAFRYETLCNELSFLSDAMKSEEITALTK</sequence>
<reference key="1">
    <citation type="journal article" date="1997" name="Gene">
        <title>Cloning and expression of cDNA encoding heart-type isoform of AMP deaminase.</title>
        <authorList>
            <person name="Wang X."/>
            <person name="Morisaki H."/>
            <person name="Sermsuvitayawong K."/>
            <person name="Mineo I."/>
            <person name="Toyama K."/>
            <person name="Ogasawara N."/>
            <person name="Mukai T."/>
            <person name="Morisaki T."/>
        </authorList>
    </citation>
    <scope>NUCLEOTIDE SEQUENCE [MRNA]</scope>
    <scope>FUNCTION</scope>
    <scope>CATALYTIC ACTIVITY</scope>
    <scope>PATHWAY</scope>
    <source>
        <tissue>Heart</tissue>
    </source>
</reference>
<reference key="2">
    <citation type="journal article" date="1997" name="Mamm. Genome">
        <title>Genomic organization of Ampd3, heart-type AMPD gene, located in mouse chromosome 7.</title>
        <authorList>
            <person name="Sermsuvitayawong K."/>
            <person name="Wang X."/>
            <person name="Nagabukuro A."/>
            <person name="Matsuda Y."/>
            <person name="Morisaki H."/>
            <person name="Toyama K."/>
            <person name="Mukai T."/>
            <person name="Morisaki T."/>
        </authorList>
    </citation>
    <scope>NUCLEOTIDE SEQUENCE [GENOMIC DNA]</scope>
    <source>
        <strain>129/Sv</strain>
    </source>
</reference>
<reference key="3">
    <citation type="journal article" date="2005" name="Science">
        <title>The transcriptional landscape of the mammalian genome.</title>
        <authorList>
            <person name="Carninci P."/>
            <person name="Kasukawa T."/>
            <person name="Katayama S."/>
            <person name="Gough J."/>
            <person name="Frith M.C."/>
            <person name="Maeda N."/>
            <person name="Oyama R."/>
            <person name="Ravasi T."/>
            <person name="Lenhard B."/>
            <person name="Wells C."/>
            <person name="Kodzius R."/>
            <person name="Shimokawa K."/>
            <person name="Bajic V.B."/>
            <person name="Brenner S.E."/>
            <person name="Batalov S."/>
            <person name="Forrest A.R."/>
            <person name="Zavolan M."/>
            <person name="Davis M.J."/>
            <person name="Wilming L.G."/>
            <person name="Aidinis V."/>
            <person name="Allen J.E."/>
            <person name="Ambesi-Impiombato A."/>
            <person name="Apweiler R."/>
            <person name="Aturaliya R.N."/>
            <person name="Bailey T.L."/>
            <person name="Bansal M."/>
            <person name="Baxter L."/>
            <person name="Beisel K.W."/>
            <person name="Bersano T."/>
            <person name="Bono H."/>
            <person name="Chalk A.M."/>
            <person name="Chiu K.P."/>
            <person name="Choudhary V."/>
            <person name="Christoffels A."/>
            <person name="Clutterbuck D.R."/>
            <person name="Crowe M.L."/>
            <person name="Dalla E."/>
            <person name="Dalrymple B.P."/>
            <person name="de Bono B."/>
            <person name="Della Gatta G."/>
            <person name="di Bernardo D."/>
            <person name="Down T."/>
            <person name="Engstrom P."/>
            <person name="Fagiolini M."/>
            <person name="Faulkner G."/>
            <person name="Fletcher C.F."/>
            <person name="Fukushima T."/>
            <person name="Furuno M."/>
            <person name="Futaki S."/>
            <person name="Gariboldi M."/>
            <person name="Georgii-Hemming P."/>
            <person name="Gingeras T.R."/>
            <person name="Gojobori T."/>
            <person name="Green R.E."/>
            <person name="Gustincich S."/>
            <person name="Harbers M."/>
            <person name="Hayashi Y."/>
            <person name="Hensch T.K."/>
            <person name="Hirokawa N."/>
            <person name="Hill D."/>
            <person name="Huminiecki L."/>
            <person name="Iacono M."/>
            <person name="Ikeo K."/>
            <person name="Iwama A."/>
            <person name="Ishikawa T."/>
            <person name="Jakt M."/>
            <person name="Kanapin A."/>
            <person name="Katoh M."/>
            <person name="Kawasawa Y."/>
            <person name="Kelso J."/>
            <person name="Kitamura H."/>
            <person name="Kitano H."/>
            <person name="Kollias G."/>
            <person name="Krishnan S.P."/>
            <person name="Kruger A."/>
            <person name="Kummerfeld S.K."/>
            <person name="Kurochkin I.V."/>
            <person name="Lareau L.F."/>
            <person name="Lazarevic D."/>
            <person name="Lipovich L."/>
            <person name="Liu J."/>
            <person name="Liuni S."/>
            <person name="McWilliam S."/>
            <person name="Madan Babu M."/>
            <person name="Madera M."/>
            <person name="Marchionni L."/>
            <person name="Matsuda H."/>
            <person name="Matsuzawa S."/>
            <person name="Miki H."/>
            <person name="Mignone F."/>
            <person name="Miyake S."/>
            <person name="Morris K."/>
            <person name="Mottagui-Tabar S."/>
            <person name="Mulder N."/>
            <person name="Nakano N."/>
            <person name="Nakauchi H."/>
            <person name="Ng P."/>
            <person name="Nilsson R."/>
            <person name="Nishiguchi S."/>
            <person name="Nishikawa S."/>
            <person name="Nori F."/>
            <person name="Ohara O."/>
            <person name="Okazaki Y."/>
            <person name="Orlando V."/>
            <person name="Pang K.C."/>
            <person name="Pavan W.J."/>
            <person name="Pavesi G."/>
            <person name="Pesole G."/>
            <person name="Petrovsky N."/>
            <person name="Piazza S."/>
            <person name="Reed J."/>
            <person name="Reid J.F."/>
            <person name="Ring B.Z."/>
            <person name="Ringwald M."/>
            <person name="Rost B."/>
            <person name="Ruan Y."/>
            <person name="Salzberg S.L."/>
            <person name="Sandelin A."/>
            <person name="Schneider C."/>
            <person name="Schoenbach C."/>
            <person name="Sekiguchi K."/>
            <person name="Semple C.A."/>
            <person name="Seno S."/>
            <person name="Sessa L."/>
            <person name="Sheng Y."/>
            <person name="Shibata Y."/>
            <person name="Shimada H."/>
            <person name="Shimada K."/>
            <person name="Silva D."/>
            <person name="Sinclair B."/>
            <person name="Sperling S."/>
            <person name="Stupka E."/>
            <person name="Sugiura K."/>
            <person name="Sultana R."/>
            <person name="Takenaka Y."/>
            <person name="Taki K."/>
            <person name="Tammoja K."/>
            <person name="Tan S.L."/>
            <person name="Tang S."/>
            <person name="Taylor M.S."/>
            <person name="Tegner J."/>
            <person name="Teichmann S.A."/>
            <person name="Ueda H.R."/>
            <person name="van Nimwegen E."/>
            <person name="Verardo R."/>
            <person name="Wei C.L."/>
            <person name="Yagi K."/>
            <person name="Yamanishi H."/>
            <person name="Zabarovsky E."/>
            <person name="Zhu S."/>
            <person name="Zimmer A."/>
            <person name="Hide W."/>
            <person name="Bult C."/>
            <person name="Grimmond S.M."/>
            <person name="Teasdale R.D."/>
            <person name="Liu E.T."/>
            <person name="Brusic V."/>
            <person name="Quackenbush J."/>
            <person name="Wahlestedt C."/>
            <person name="Mattick J.S."/>
            <person name="Hume D.A."/>
            <person name="Kai C."/>
            <person name="Sasaki D."/>
            <person name="Tomaru Y."/>
            <person name="Fukuda S."/>
            <person name="Kanamori-Katayama M."/>
            <person name="Suzuki M."/>
            <person name="Aoki J."/>
            <person name="Arakawa T."/>
            <person name="Iida J."/>
            <person name="Imamura K."/>
            <person name="Itoh M."/>
            <person name="Kato T."/>
            <person name="Kawaji H."/>
            <person name="Kawagashira N."/>
            <person name="Kawashima T."/>
            <person name="Kojima M."/>
            <person name="Kondo S."/>
            <person name="Konno H."/>
            <person name="Nakano K."/>
            <person name="Ninomiya N."/>
            <person name="Nishio T."/>
            <person name="Okada M."/>
            <person name="Plessy C."/>
            <person name="Shibata K."/>
            <person name="Shiraki T."/>
            <person name="Suzuki S."/>
            <person name="Tagami M."/>
            <person name="Waki K."/>
            <person name="Watahiki A."/>
            <person name="Okamura-Oho Y."/>
            <person name="Suzuki H."/>
            <person name="Kawai J."/>
            <person name="Hayashizaki Y."/>
        </authorList>
    </citation>
    <scope>NUCLEOTIDE SEQUENCE [LARGE SCALE MRNA]</scope>
    <source>
        <strain>C57BL/6J</strain>
        <tissue>Ovary</tissue>
        <tissue>Uterus</tissue>
    </source>
</reference>
<reference key="4">
    <citation type="submission" date="2005-07" db="EMBL/GenBank/DDBJ databases">
        <authorList>
            <person name="Mural R.J."/>
            <person name="Adams M.D."/>
            <person name="Myers E.W."/>
            <person name="Smith H.O."/>
            <person name="Venter J.C."/>
        </authorList>
    </citation>
    <scope>NUCLEOTIDE SEQUENCE [LARGE SCALE GENOMIC DNA]</scope>
</reference>
<reference key="5">
    <citation type="journal article" date="2004" name="Genome Res.">
        <title>The status, quality, and expansion of the NIH full-length cDNA project: the Mammalian Gene Collection (MGC).</title>
        <authorList>
            <consortium name="The MGC Project Team"/>
        </authorList>
    </citation>
    <scope>NUCLEOTIDE SEQUENCE [LARGE SCALE MRNA]</scope>
    <source>
        <strain>C57BL/6J</strain>
        <tissue>Brain</tissue>
        <tissue>Eye</tissue>
    </source>
</reference>
<reference key="6">
    <citation type="journal article" date="2010" name="Cell">
        <title>A tissue-specific atlas of mouse protein phosphorylation and expression.</title>
        <authorList>
            <person name="Huttlin E.L."/>
            <person name="Jedrychowski M.P."/>
            <person name="Elias J.E."/>
            <person name="Goswami T."/>
            <person name="Rad R."/>
            <person name="Beausoleil S.A."/>
            <person name="Villen J."/>
            <person name="Haas W."/>
            <person name="Sowa M.E."/>
            <person name="Gygi S.P."/>
        </authorList>
    </citation>
    <scope>IDENTIFICATION BY MASS SPECTROMETRY [LARGE SCALE ANALYSIS]</scope>
    <source>
        <tissue>Brain</tissue>
        <tissue>Brown adipose tissue</tissue>
        <tissue>Heart</tissue>
        <tissue>Kidney</tissue>
        <tissue>Lung</tissue>
        <tissue>Spleen</tissue>
    </source>
</reference>
<name>AMPD3_MOUSE</name>
<feature type="chain" id="PRO_0000194411" description="AMP deaminase 3">
    <location>
        <begin position="1"/>
        <end position="766"/>
    </location>
</feature>
<feature type="region of interest" description="Disordered" evidence="4">
    <location>
        <begin position="89"/>
        <end position="114"/>
    </location>
</feature>
<feature type="compositionally biased region" description="Low complexity" evidence="4">
    <location>
        <begin position="99"/>
        <end position="110"/>
    </location>
</feature>
<feature type="active site" description="Proton acceptor" evidence="3">
    <location>
        <position position="607"/>
    </location>
</feature>
<feature type="binding site" evidence="1">
    <location>
        <position position="316"/>
    </location>
    <ligand>
        <name>Zn(2+)</name>
        <dbReference type="ChEBI" id="CHEBI:29105"/>
        <note>catalytic</note>
    </ligand>
</feature>
<feature type="binding site" evidence="1">
    <location>
        <position position="318"/>
    </location>
    <ligand>
        <name>substrate</name>
    </ligand>
</feature>
<feature type="binding site" evidence="1">
    <location>
        <position position="318"/>
    </location>
    <ligand>
        <name>Zn(2+)</name>
        <dbReference type="ChEBI" id="CHEBI:29105"/>
        <note>catalytic</note>
    </ligand>
</feature>
<feature type="binding site" evidence="1">
    <location>
        <begin position="387"/>
        <end position="392"/>
    </location>
    <ligand>
        <name>substrate</name>
    </ligand>
</feature>
<feature type="binding site" evidence="1">
    <location>
        <position position="585"/>
    </location>
    <ligand>
        <name>Zn(2+)</name>
        <dbReference type="ChEBI" id="CHEBI:29105"/>
        <note>catalytic</note>
    </ligand>
</feature>
<feature type="binding site" evidence="1">
    <location>
        <position position="588"/>
    </location>
    <ligand>
        <name>substrate</name>
    </ligand>
</feature>
<feature type="binding site" evidence="1">
    <location>
        <position position="662"/>
    </location>
    <ligand>
        <name>Zn(2+)</name>
        <dbReference type="ChEBI" id="CHEBI:29105"/>
        <note>catalytic</note>
    </ligand>
</feature>
<feature type="binding site" evidence="1">
    <location>
        <begin position="663"/>
        <end position="666"/>
    </location>
    <ligand>
        <name>substrate</name>
    </ligand>
</feature>
<feature type="modified residue" description="Phosphoserine" evidence="2">
    <location>
        <position position="85"/>
    </location>
</feature>
<feature type="modified residue" description="Phosphoserine" evidence="2">
    <location>
        <position position="107"/>
    </location>
</feature>
<feature type="sequence conflict" description="In Ref. 1; BAA19933." evidence="6" ref="1">
    <original>E</original>
    <variation>K</variation>
    <location>
        <position position="251"/>
    </location>
</feature>
<feature type="sequence conflict" description="In Ref. 1; BAA19933." evidence="6" ref="1">
    <original>N</original>
    <variation>K</variation>
    <location>
        <position position="645"/>
    </location>
</feature>
<organism>
    <name type="scientific">Mus musculus</name>
    <name type="common">Mouse</name>
    <dbReference type="NCBI Taxonomy" id="10090"/>
    <lineage>
        <taxon>Eukaryota</taxon>
        <taxon>Metazoa</taxon>
        <taxon>Chordata</taxon>
        <taxon>Craniata</taxon>
        <taxon>Vertebrata</taxon>
        <taxon>Euteleostomi</taxon>
        <taxon>Mammalia</taxon>
        <taxon>Eutheria</taxon>
        <taxon>Euarchontoglires</taxon>
        <taxon>Glires</taxon>
        <taxon>Rodentia</taxon>
        <taxon>Myomorpha</taxon>
        <taxon>Muroidea</taxon>
        <taxon>Muridae</taxon>
        <taxon>Murinae</taxon>
        <taxon>Mus</taxon>
        <taxon>Mus</taxon>
    </lineage>
</organism>
<comment type="function">
    <text evidence="7">AMP deaminase plays a critical role in energy metabolism.</text>
</comment>
<comment type="catalytic activity">
    <reaction evidence="5">
        <text>AMP + H2O + H(+) = IMP + NH4(+)</text>
        <dbReference type="Rhea" id="RHEA:14777"/>
        <dbReference type="ChEBI" id="CHEBI:15377"/>
        <dbReference type="ChEBI" id="CHEBI:15378"/>
        <dbReference type="ChEBI" id="CHEBI:28938"/>
        <dbReference type="ChEBI" id="CHEBI:58053"/>
        <dbReference type="ChEBI" id="CHEBI:456215"/>
        <dbReference type="EC" id="3.5.4.6"/>
    </reaction>
    <physiologicalReaction direction="left-to-right" evidence="7">
        <dbReference type="Rhea" id="RHEA:14778"/>
    </physiologicalReaction>
</comment>
<comment type="cofactor">
    <cofactor evidence="1">
        <name>Zn(2+)</name>
        <dbReference type="ChEBI" id="CHEBI:29105"/>
    </cofactor>
    <text evidence="1">Binds 1 zinc ion per subunit.</text>
</comment>
<comment type="pathway">
    <text evidence="7">Purine metabolism; IMP biosynthesis via salvage pathway; IMP from AMP: step 1/1.</text>
</comment>
<comment type="subunit">
    <text evidence="1">Homotetramer.</text>
</comment>
<comment type="tissue specificity">
    <text>Found in heart, lung brain, spleen, kidney and to a lesser extent in liver.</text>
</comment>
<comment type="similarity">
    <text evidence="6">Belongs to the metallo-dependent hydrolases superfamily. Adenosine and AMP deaminases family.</text>
</comment>
<keyword id="KW-0378">Hydrolase</keyword>
<keyword id="KW-0479">Metal-binding</keyword>
<keyword id="KW-0546">Nucleotide metabolism</keyword>
<keyword id="KW-0597">Phosphoprotein</keyword>
<keyword id="KW-1185">Reference proteome</keyword>
<keyword id="KW-0862">Zinc</keyword>
<gene>
    <name evidence="8" type="primary">Ampd3</name>
</gene>
<proteinExistence type="evidence at protein level"/>
<dbReference type="EC" id="3.5.4.6" evidence="5"/>
<dbReference type="EMBL" id="D85596">
    <property type="protein sequence ID" value="BAA19933.1"/>
    <property type="molecule type" value="mRNA"/>
</dbReference>
<dbReference type="EMBL" id="D88994">
    <property type="protein sequence ID" value="BAA32548.1"/>
    <property type="status" value="ALT_SEQ"/>
    <property type="molecule type" value="Genomic_DNA"/>
</dbReference>
<dbReference type="EMBL" id="AK133465">
    <property type="protein sequence ID" value="BAE21671.1"/>
    <property type="molecule type" value="mRNA"/>
</dbReference>
<dbReference type="EMBL" id="CH466531">
    <property type="protein sequence ID" value="EDL16988.1"/>
    <property type="molecule type" value="Genomic_DNA"/>
</dbReference>
<dbReference type="EMBL" id="CH466531">
    <property type="protein sequence ID" value="EDL16989.1"/>
    <property type="molecule type" value="Genomic_DNA"/>
</dbReference>
<dbReference type="EMBL" id="CH466531">
    <property type="protein sequence ID" value="EDL16990.1"/>
    <property type="molecule type" value="Genomic_DNA"/>
</dbReference>
<dbReference type="EMBL" id="BC040366">
    <property type="protein sequence ID" value="AAH40366.1"/>
    <property type="molecule type" value="mRNA"/>
</dbReference>
<dbReference type="EMBL" id="BC056380">
    <property type="protein sequence ID" value="AAH56380.1"/>
    <property type="molecule type" value="mRNA"/>
</dbReference>
<dbReference type="CCDS" id="CCDS21747.1"/>
<dbReference type="RefSeq" id="NP_001263230.1">
    <property type="nucleotide sequence ID" value="NM_001276301.2"/>
</dbReference>
<dbReference type="RefSeq" id="NP_001398841.1">
    <property type="nucleotide sequence ID" value="NM_001411912.1"/>
</dbReference>
<dbReference type="RefSeq" id="NP_001398842.1">
    <property type="nucleotide sequence ID" value="NM_001411913.1"/>
</dbReference>
<dbReference type="RefSeq" id="NP_001398843.1">
    <property type="nucleotide sequence ID" value="NM_001411914.1"/>
</dbReference>
<dbReference type="RefSeq" id="NP_033797.2">
    <property type="nucleotide sequence ID" value="NM_009667.4"/>
</dbReference>
<dbReference type="RefSeq" id="XP_006507285.1">
    <property type="nucleotide sequence ID" value="XM_006507222.3"/>
</dbReference>
<dbReference type="RefSeq" id="XP_030097862.1">
    <property type="nucleotide sequence ID" value="XM_030242002.2"/>
</dbReference>
<dbReference type="RefSeq" id="XP_036008472.1">
    <property type="nucleotide sequence ID" value="XM_036152579.1"/>
</dbReference>
<dbReference type="SMR" id="O08739"/>
<dbReference type="BioGRID" id="198091">
    <property type="interactions" value="5"/>
</dbReference>
<dbReference type="FunCoup" id="O08739">
    <property type="interactions" value="850"/>
</dbReference>
<dbReference type="IntAct" id="O08739">
    <property type="interactions" value="2"/>
</dbReference>
<dbReference type="STRING" id="10090.ENSMUSP00000005829"/>
<dbReference type="iPTMnet" id="O08739"/>
<dbReference type="PhosphoSitePlus" id="O08739"/>
<dbReference type="SwissPalm" id="O08739"/>
<dbReference type="jPOST" id="O08739"/>
<dbReference type="PaxDb" id="10090-ENSMUSP00000005829"/>
<dbReference type="PeptideAtlas" id="O08739"/>
<dbReference type="ProteomicsDB" id="296351"/>
<dbReference type="Pumba" id="O08739"/>
<dbReference type="Antibodypedia" id="42354">
    <property type="antibodies" value="296 antibodies from 33 providers"/>
</dbReference>
<dbReference type="DNASU" id="11717"/>
<dbReference type="Ensembl" id="ENSMUST00000005829.13">
    <property type="protein sequence ID" value="ENSMUSP00000005829.7"/>
    <property type="gene ID" value="ENSMUSG00000005686.18"/>
</dbReference>
<dbReference type="Ensembl" id="ENSMUST00000170374.8">
    <property type="protein sequence ID" value="ENSMUSP00000130495.2"/>
    <property type="gene ID" value="ENSMUSG00000005686.18"/>
</dbReference>
<dbReference type="GeneID" id="11717"/>
<dbReference type="KEGG" id="mmu:11717"/>
<dbReference type="UCSC" id="uc009jfl.2">
    <property type="organism name" value="mouse"/>
</dbReference>
<dbReference type="AGR" id="MGI:1096344"/>
<dbReference type="CTD" id="272"/>
<dbReference type="MGI" id="MGI:1096344">
    <property type="gene designation" value="Ampd3"/>
</dbReference>
<dbReference type="VEuPathDB" id="HostDB:ENSMUSG00000005686"/>
<dbReference type="eggNOG" id="KOG1096">
    <property type="taxonomic scope" value="Eukaryota"/>
</dbReference>
<dbReference type="GeneTree" id="ENSGT00950000183011"/>
<dbReference type="HOGENOM" id="CLU_003782_4_0_1"/>
<dbReference type="InParanoid" id="O08739"/>
<dbReference type="OMA" id="GNAGPEC"/>
<dbReference type="PhylomeDB" id="O08739"/>
<dbReference type="TreeFam" id="TF300439"/>
<dbReference type="Reactome" id="R-MMU-6798695">
    <property type="pathway name" value="Neutrophil degranulation"/>
</dbReference>
<dbReference type="Reactome" id="R-MMU-74217">
    <property type="pathway name" value="Purine salvage"/>
</dbReference>
<dbReference type="UniPathway" id="UPA00591">
    <property type="reaction ID" value="UER00663"/>
</dbReference>
<dbReference type="BioGRID-ORCS" id="11717">
    <property type="hits" value="2 hits in 76 CRISPR screens"/>
</dbReference>
<dbReference type="PRO" id="PR:O08739"/>
<dbReference type="Proteomes" id="UP000000589">
    <property type="component" value="Chromosome 7"/>
</dbReference>
<dbReference type="RNAct" id="O08739">
    <property type="molecule type" value="protein"/>
</dbReference>
<dbReference type="Bgee" id="ENSMUSG00000005686">
    <property type="expression patterns" value="Expressed in decidua and 228 other cell types or tissues"/>
</dbReference>
<dbReference type="ExpressionAtlas" id="O08739">
    <property type="expression patterns" value="baseline and differential"/>
</dbReference>
<dbReference type="GO" id="GO:0003876">
    <property type="term" value="F:AMP deaminase activity"/>
    <property type="evidence" value="ECO:0000314"/>
    <property type="project" value="MGI"/>
</dbReference>
<dbReference type="GO" id="GO:0046872">
    <property type="term" value="F:metal ion binding"/>
    <property type="evidence" value="ECO:0007669"/>
    <property type="project" value="UniProtKB-KW"/>
</dbReference>
<dbReference type="GO" id="GO:0046032">
    <property type="term" value="P:ADP catabolic process"/>
    <property type="evidence" value="ECO:0000315"/>
    <property type="project" value="MGI"/>
</dbReference>
<dbReference type="GO" id="GO:0046031">
    <property type="term" value="P:ADP metabolic process"/>
    <property type="evidence" value="ECO:0000315"/>
    <property type="project" value="CACAO"/>
</dbReference>
<dbReference type="GO" id="GO:0006196">
    <property type="term" value="P:AMP catabolic process"/>
    <property type="evidence" value="ECO:0000315"/>
    <property type="project" value="MGI"/>
</dbReference>
<dbReference type="GO" id="GO:0046033">
    <property type="term" value="P:AMP metabolic process"/>
    <property type="evidence" value="ECO:0000315"/>
    <property type="project" value="CACAO"/>
</dbReference>
<dbReference type="GO" id="GO:0046034">
    <property type="term" value="P:ATP metabolic process"/>
    <property type="evidence" value="ECO:0000315"/>
    <property type="project" value="CACAO"/>
</dbReference>
<dbReference type="GO" id="GO:0097009">
    <property type="term" value="P:energy homeostasis"/>
    <property type="evidence" value="ECO:0000315"/>
    <property type="project" value="MGI"/>
</dbReference>
<dbReference type="GO" id="GO:0034101">
    <property type="term" value="P:erythrocyte homeostasis"/>
    <property type="evidence" value="ECO:0000315"/>
    <property type="project" value="CACAO"/>
</dbReference>
<dbReference type="GO" id="GO:0046039">
    <property type="term" value="P:GTP metabolic process"/>
    <property type="evidence" value="ECO:0000315"/>
    <property type="project" value="CACAO"/>
</dbReference>
<dbReference type="GO" id="GO:0006188">
    <property type="term" value="P:IMP biosynthetic process"/>
    <property type="evidence" value="ECO:0000314"/>
    <property type="project" value="MGI"/>
</dbReference>
<dbReference type="GO" id="GO:0032264">
    <property type="term" value="P:IMP salvage"/>
    <property type="evidence" value="ECO:0000315"/>
    <property type="project" value="MGI"/>
</dbReference>
<dbReference type="CDD" id="cd01319">
    <property type="entry name" value="AMPD"/>
    <property type="match status" value="1"/>
</dbReference>
<dbReference type="FunFam" id="4.10.800.20:FF:000001">
    <property type="entry name" value="AMP deaminase"/>
    <property type="match status" value="1"/>
</dbReference>
<dbReference type="FunFam" id="3.20.20.140:FF:000171">
    <property type="entry name" value="AMP deaminase 3"/>
    <property type="match status" value="1"/>
</dbReference>
<dbReference type="Gene3D" id="4.10.800.20">
    <property type="match status" value="1"/>
</dbReference>
<dbReference type="Gene3D" id="3.20.20.140">
    <property type="entry name" value="Metal-dependent hydrolases"/>
    <property type="match status" value="1"/>
</dbReference>
<dbReference type="InterPro" id="IPR006650">
    <property type="entry name" value="A/AMP_deam_AS"/>
</dbReference>
<dbReference type="InterPro" id="IPR006329">
    <property type="entry name" value="AMPD"/>
</dbReference>
<dbReference type="InterPro" id="IPR032466">
    <property type="entry name" value="Metal_Hydrolase"/>
</dbReference>
<dbReference type="NCBIfam" id="TIGR01429">
    <property type="entry name" value="AMP_deaminase"/>
    <property type="match status" value="1"/>
</dbReference>
<dbReference type="PANTHER" id="PTHR11359">
    <property type="entry name" value="AMP DEAMINASE"/>
    <property type="match status" value="1"/>
</dbReference>
<dbReference type="PANTHER" id="PTHR11359:SF2">
    <property type="entry name" value="AMP DEAMINASE 3"/>
    <property type="match status" value="1"/>
</dbReference>
<dbReference type="Pfam" id="PF19326">
    <property type="entry name" value="AMP_deaminase"/>
    <property type="match status" value="1"/>
</dbReference>
<dbReference type="PIRSF" id="PIRSF001251">
    <property type="entry name" value="AMP_deaminase_met"/>
    <property type="match status" value="1"/>
</dbReference>
<dbReference type="SUPFAM" id="SSF51556">
    <property type="entry name" value="Metallo-dependent hydrolases"/>
    <property type="match status" value="1"/>
</dbReference>
<dbReference type="PROSITE" id="PS00485">
    <property type="entry name" value="A_DEAMINASE"/>
    <property type="match status" value="1"/>
</dbReference>
<accession>O08739</accession>
<accession>O88692</accession>
<accession>Q8CFR4</accession>
<evidence type="ECO:0000250" key="1"/>
<evidence type="ECO:0000250" key="2">
    <source>
        <dbReference type="UniProtKB" id="Q01432"/>
    </source>
</evidence>
<evidence type="ECO:0000255" key="3">
    <source>
        <dbReference type="PROSITE-ProRule" id="PRU10104"/>
    </source>
</evidence>
<evidence type="ECO:0000256" key="4">
    <source>
        <dbReference type="SAM" id="MobiDB-lite"/>
    </source>
</evidence>
<evidence type="ECO:0000269" key="5">
    <source>
    </source>
</evidence>
<evidence type="ECO:0000305" key="6"/>
<evidence type="ECO:0000305" key="7">
    <source>
    </source>
</evidence>
<evidence type="ECO:0000312" key="8">
    <source>
        <dbReference type="MGI" id="MGI:1096344"/>
    </source>
</evidence>